<accession>Q8FDH5</accession>
<proteinExistence type="inferred from homology"/>
<dbReference type="EC" id="2.7.1.167" evidence="1"/>
<dbReference type="EC" id="2.7.7.70" evidence="1"/>
<dbReference type="EMBL" id="AE014075">
    <property type="protein sequence ID" value="AAN82245.1"/>
    <property type="molecule type" value="Genomic_DNA"/>
</dbReference>
<dbReference type="RefSeq" id="WP_000869177.1">
    <property type="nucleotide sequence ID" value="NZ_CP051263.1"/>
</dbReference>
<dbReference type="SMR" id="Q8FDH5"/>
<dbReference type="STRING" id="199310.c3800"/>
<dbReference type="KEGG" id="ecc:c3800"/>
<dbReference type="eggNOG" id="COG0615">
    <property type="taxonomic scope" value="Bacteria"/>
</dbReference>
<dbReference type="eggNOG" id="COG2870">
    <property type="taxonomic scope" value="Bacteria"/>
</dbReference>
<dbReference type="HOGENOM" id="CLU_021150_2_1_6"/>
<dbReference type="BioCyc" id="ECOL199310:C3800-MONOMER"/>
<dbReference type="UniPathway" id="UPA00356">
    <property type="reaction ID" value="UER00437"/>
</dbReference>
<dbReference type="UniPathway" id="UPA00356">
    <property type="reaction ID" value="UER00439"/>
</dbReference>
<dbReference type="UniPathway" id="UPA00958"/>
<dbReference type="Proteomes" id="UP000001410">
    <property type="component" value="Chromosome"/>
</dbReference>
<dbReference type="GO" id="GO:0005829">
    <property type="term" value="C:cytosol"/>
    <property type="evidence" value="ECO:0007669"/>
    <property type="project" value="TreeGrafter"/>
</dbReference>
<dbReference type="GO" id="GO:0005524">
    <property type="term" value="F:ATP binding"/>
    <property type="evidence" value="ECO:0007669"/>
    <property type="project" value="UniProtKB-UniRule"/>
</dbReference>
<dbReference type="GO" id="GO:0033785">
    <property type="term" value="F:heptose 7-phosphate kinase activity"/>
    <property type="evidence" value="ECO:0007669"/>
    <property type="project" value="UniProtKB-UniRule"/>
</dbReference>
<dbReference type="GO" id="GO:0033786">
    <property type="term" value="F:heptose-1-phosphate adenylyltransferase activity"/>
    <property type="evidence" value="ECO:0007669"/>
    <property type="project" value="UniProtKB-UniRule"/>
</dbReference>
<dbReference type="GO" id="GO:0016773">
    <property type="term" value="F:phosphotransferase activity, alcohol group as acceptor"/>
    <property type="evidence" value="ECO:0007669"/>
    <property type="project" value="InterPro"/>
</dbReference>
<dbReference type="GO" id="GO:0097171">
    <property type="term" value="P:ADP-L-glycero-beta-D-manno-heptose biosynthetic process"/>
    <property type="evidence" value="ECO:0007669"/>
    <property type="project" value="UniProtKB-UniPathway"/>
</dbReference>
<dbReference type="GO" id="GO:0009244">
    <property type="term" value="P:lipopolysaccharide core region biosynthetic process"/>
    <property type="evidence" value="ECO:0007669"/>
    <property type="project" value="UniProtKB-UniPathway"/>
</dbReference>
<dbReference type="CDD" id="cd01172">
    <property type="entry name" value="RfaE_like"/>
    <property type="match status" value="1"/>
</dbReference>
<dbReference type="FunFam" id="3.40.1190.20:FF:000002">
    <property type="entry name" value="Bifunctional protein HldE"/>
    <property type="match status" value="1"/>
</dbReference>
<dbReference type="FunFam" id="3.40.50.620:FF:000028">
    <property type="entry name" value="Bifunctional protein HldE"/>
    <property type="match status" value="1"/>
</dbReference>
<dbReference type="Gene3D" id="3.40.1190.20">
    <property type="match status" value="1"/>
</dbReference>
<dbReference type="Gene3D" id="3.40.50.620">
    <property type="entry name" value="HUPs"/>
    <property type="match status" value="1"/>
</dbReference>
<dbReference type="HAMAP" id="MF_01603">
    <property type="entry name" value="HldE"/>
    <property type="match status" value="1"/>
</dbReference>
<dbReference type="InterPro" id="IPR023030">
    <property type="entry name" value="Bifunc_HldE"/>
</dbReference>
<dbReference type="InterPro" id="IPR002173">
    <property type="entry name" value="Carboh/pur_kinase_PfkB_CS"/>
</dbReference>
<dbReference type="InterPro" id="IPR004821">
    <property type="entry name" value="Cyt_trans-like"/>
</dbReference>
<dbReference type="InterPro" id="IPR011611">
    <property type="entry name" value="PfkB_dom"/>
</dbReference>
<dbReference type="InterPro" id="IPR011913">
    <property type="entry name" value="RfaE_dom_I"/>
</dbReference>
<dbReference type="InterPro" id="IPR011914">
    <property type="entry name" value="RfaE_dom_II"/>
</dbReference>
<dbReference type="InterPro" id="IPR029056">
    <property type="entry name" value="Ribokinase-like"/>
</dbReference>
<dbReference type="InterPro" id="IPR014729">
    <property type="entry name" value="Rossmann-like_a/b/a_fold"/>
</dbReference>
<dbReference type="NCBIfam" id="TIGR00125">
    <property type="entry name" value="cyt_tran_rel"/>
    <property type="match status" value="1"/>
</dbReference>
<dbReference type="NCBIfam" id="NF008454">
    <property type="entry name" value="PRK11316.1"/>
    <property type="match status" value="1"/>
</dbReference>
<dbReference type="NCBIfam" id="TIGR02198">
    <property type="entry name" value="rfaE_dom_I"/>
    <property type="match status" value="1"/>
</dbReference>
<dbReference type="NCBIfam" id="TIGR02199">
    <property type="entry name" value="rfaE_dom_II"/>
    <property type="match status" value="1"/>
</dbReference>
<dbReference type="PANTHER" id="PTHR46969">
    <property type="entry name" value="BIFUNCTIONAL PROTEIN HLDE"/>
    <property type="match status" value="1"/>
</dbReference>
<dbReference type="PANTHER" id="PTHR46969:SF1">
    <property type="entry name" value="BIFUNCTIONAL PROTEIN HLDE"/>
    <property type="match status" value="1"/>
</dbReference>
<dbReference type="Pfam" id="PF01467">
    <property type="entry name" value="CTP_transf_like"/>
    <property type="match status" value="1"/>
</dbReference>
<dbReference type="Pfam" id="PF00294">
    <property type="entry name" value="PfkB"/>
    <property type="match status" value="1"/>
</dbReference>
<dbReference type="SUPFAM" id="SSF52374">
    <property type="entry name" value="Nucleotidylyl transferase"/>
    <property type="match status" value="1"/>
</dbReference>
<dbReference type="SUPFAM" id="SSF53613">
    <property type="entry name" value="Ribokinase-like"/>
    <property type="match status" value="1"/>
</dbReference>
<dbReference type="PROSITE" id="PS00583">
    <property type="entry name" value="PFKB_KINASES_1"/>
    <property type="match status" value="1"/>
</dbReference>
<name>HLDE_ECOL6</name>
<feature type="chain" id="PRO_0000080109" description="Bifunctional protein HldE">
    <location>
        <begin position="1"/>
        <end position="477"/>
    </location>
</feature>
<feature type="region of interest" description="Ribokinase">
    <location>
        <begin position="1"/>
        <end position="318"/>
    </location>
</feature>
<feature type="region of interest" description="Cytidylyltransferase">
    <location>
        <begin position="344"/>
        <end position="477"/>
    </location>
</feature>
<feature type="active site" evidence="1">
    <location>
        <position position="264"/>
    </location>
</feature>
<feature type="binding site" evidence="1">
    <location>
        <begin position="195"/>
        <end position="198"/>
    </location>
    <ligand>
        <name>ATP</name>
        <dbReference type="ChEBI" id="CHEBI:30616"/>
    </ligand>
</feature>
<feature type="modified residue" description="N6-acetyllysine" evidence="1">
    <location>
        <position position="179"/>
    </location>
</feature>
<organism>
    <name type="scientific">Escherichia coli O6:H1 (strain CFT073 / ATCC 700928 / UPEC)</name>
    <dbReference type="NCBI Taxonomy" id="199310"/>
    <lineage>
        <taxon>Bacteria</taxon>
        <taxon>Pseudomonadati</taxon>
        <taxon>Pseudomonadota</taxon>
        <taxon>Gammaproteobacteria</taxon>
        <taxon>Enterobacterales</taxon>
        <taxon>Enterobacteriaceae</taxon>
        <taxon>Escherichia</taxon>
    </lineage>
</organism>
<gene>
    <name evidence="1" type="primary">hldE</name>
    <name type="synonym">rfaE</name>
    <name type="ordered locus">c3800</name>
</gene>
<reference key="1">
    <citation type="journal article" date="2002" name="Proc. Natl. Acad. Sci. U.S.A.">
        <title>Extensive mosaic structure revealed by the complete genome sequence of uropathogenic Escherichia coli.</title>
        <authorList>
            <person name="Welch R.A."/>
            <person name="Burland V."/>
            <person name="Plunkett G. III"/>
            <person name="Redford P."/>
            <person name="Roesch P."/>
            <person name="Rasko D."/>
            <person name="Buckles E.L."/>
            <person name="Liou S.-R."/>
            <person name="Boutin A."/>
            <person name="Hackett J."/>
            <person name="Stroud D."/>
            <person name="Mayhew G.F."/>
            <person name="Rose D.J."/>
            <person name="Zhou S."/>
            <person name="Schwartz D.C."/>
            <person name="Perna N.T."/>
            <person name="Mobley H.L.T."/>
            <person name="Donnenberg M.S."/>
            <person name="Blattner F.R."/>
        </authorList>
    </citation>
    <scope>NUCLEOTIDE SEQUENCE [LARGE SCALE GENOMIC DNA]</scope>
    <source>
        <strain>CFT073 / ATCC 700928 / UPEC</strain>
    </source>
</reference>
<comment type="function">
    <text evidence="1">Catalyzes the phosphorylation of D-glycero-D-manno-heptose 7-phosphate at the C-1 position to selectively form D-glycero-beta-D-manno-heptose-1,7-bisphosphate.</text>
</comment>
<comment type="function">
    <text evidence="1">Catalyzes the ADP transfer from ATP to D-glycero-beta-D-manno-heptose 1-phosphate, yielding ADP-D-glycero-beta-D-manno-heptose.</text>
</comment>
<comment type="catalytic activity">
    <reaction evidence="1">
        <text>D-glycero-beta-D-manno-heptose 7-phosphate + ATP = D-glycero-beta-D-manno-heptose 1,7-bisphosphate + ADP + H(+)</text>
        <dbReference type="Rhea" id="RHEA:27473"/>
        <dbReference type="ChEBI" id="CHEBI:15378"/>
        <dbReference type="ChEBI" id="CHEBI:30616"/>
        <dbReference type="ChEBI" id="CHEBI:60204"/>
        <dbReference type="ChEBI" id="CHEBI:60208"/>
        <dbReference type="ChEBI" id="CHEBI:456216"/>
        <dbReference type="EC" id="2.7.1.167"/>
    </reaction>
</comment>
<comment type="catalytic activity">
    <reaction evidence="1">
        <text>D-glycero-beta-D-manno-heptose 1-phosphate + ATP + H(+) = ADP-D-glycero-beta-D-manno-heptose + diphosphate</text>
        <dbReference type="Rhea" id="RHEA:27465"/>
        <dbReference type="ChEBI" id="CHEBI:15378"/>
        <dbReference type="ChEBI" id="CHEBI:30616"/>
        <dbReference type="ChEBI" id="CHEBI:33019"/>
        <dbReference type="ChEBI" id="CHEBI:59967"/>
        <dbReference type="ChEBI" id="CHEBI:61593"/>
        <dbReference type="EC" id="2.7.7.70"/>
    </reaction>
</comment>
<comment type="pathway">
    <text evidence="1">Nucleotide-sugar biosynthesis; ADP-L-glycero-beta-D-manno-heptose biosynthesis; ADP-L-glycero-beta-D-manno-heptose from D-glycero-beta-D-manno-heptose 7-phosphate: step 1/4.</text>
</comment>
<comment type="pathway">
    <text evidence="1">Nucleotide-sugar biosynthesis; ADP-L-glycero-beta-D-manno-heptose biosynthesis; ADP-L-glycero-beta-D-manno-heptose from D-glycero-beta-D-manno-heptose 7-phosphate: step 3/4.</text>
</comment>
<comment type="pathway">
    <text>Bacterial outer membrane biogenesis; LPS core biosynthesis.</text>
</comment>
<comment type="subunit">
    <text evidence="1">Homodimer.</text>
</comment>
<comment type="similarity">
    <text evidence="1">In the N-terminal section; belongs to the carbohydrate kinase PfkB family.</text>
</comment>
<comment type="similarity">
    <text evidence="1">In the C-terminal section; belongs to the cytidylyltransferase family.</text>
</comment>
<keyword id="KW-0007">Acetylation</keyword>
<keyword id="KW-0067">ATP-binding</keyword>
<keyword id="KW-0119">Carbohydrate metabolism</keyword>
<keyword id="KW-0418">Kinase</keyword>
<keyword id="KW-0448">Lipopolysaccharide biosynthesis</keyword>
<keyword id="KW-0511">Multifunctional enzyme</keyword>
<keyword id="KW-0547">Nucleotide-binding</keyword>
<keyword id="KW-0548">Nucleotidyltransferase</keyword>
<keyword id="KW-1185">Reference proteome</keyword>
<keyword id="KW-0808">Transferase</keyword>
<protein>
    <recommendedName>
        <fullName evidence="1">Bifunctional protein HldE</fullName>
    </recommendedName>
    <domain>
        <recommendedName>
            <fullName evidence="1">D-beta-D-heptose 7-phosphate kinase</fullName>
            <ecNumber evidence="1">2.7.1.167</ecNumber>
        </recommendedName>
        <alternativeName>
            <fullName evidence="1">D-beta-D-heptose 7-phosphotransferase</fullName>
        </alternativeName>
        <alternativeName>
            <fullName evidence="1">D-glycero-beta-D-manno-heptose-7-phosphate kinase</fullName>
        </alternativeName>
    </domain>
    <domain>
        <recommendedName>
            <fullName evidence="1">D-beta-D-heptose 1-phosphate adenylyltransferase</fullName>
            <ecNumber evidence="1">2.7.7.70</ecNumber>
        </recommendedName>
        <alternativeName>
            <fullName evidence="1">D-glycero-beta-D-manno-heptose 1-phosphate adenylyltransferase</fullName>
        </alternativeName>
    </domain>
</protein>
<evidence type="ECO:0000255" key="1">
    <source>
        <dbReference type="HAMAP-Rule" id="MF_01603"/>
    </source>
</evidence>
<sequence length="477" mass="51036">MKVTLPEFERAGVMVVGDVMLDRYWYGPTSRISPEAPVPVVKVNTIEERPGGAANVAMNIASLGANARLVGLTGIDDAARALSKSLADVNVKCDFVSVPTHPTITKLRVLSRNQQLIRLDFEEGFEGVDPQPLHERINQALSSIGALVLSDYAKGALASVQQMIQLARKAGVPVLIDPKGTDFERYRGATLLTPNLSEFEAVVGKCKTEEEIVERGMKLIADYELSALLVTRSEQGMSLLQPGKAPLHMPTQAQEVYDVTGAGDTVIGVLAATLAAGNSLEEACFFANAAAGVVVGKLGTSTVSPIELENAVRGRADTGFGVMTEEELKLAVAAARKRGEKVVMTNGVFDILHAGHVSYLANARKLGDRLIVAVNSDASTKRLKGDSRPVNPLEQRMIVLGALEAVDWVVSFEEDTPQRLIAGILPDLLVKGGDYKPEEIAGSKEVWANGGEVLVLNFEDGCSTTNIIKKIQLDKKG</sequence>